<proteinExistence type="evidence at transcript level"/>
<feature type="chain" id="PRO_0000341953" description="Cilia-and flagella-associated protein 96">
    <location>
        <begin position="1"/>
        <end position="307"/>
    </location>
</feature>
<feature type="region of interest" description="Disordered" evidence="2">
    <location>
        <begin position="73"/>
        <end position="102"/>
    </location>
</feature>
<feature type="region of interest" description="Disordered" evidence="2">
    <location>
        <begin position="218"/>
        <end position="279"/>
    </location>
</feature>
<reference key="1">
    <citation type="submission" date="2004-10" db="EMBL/GenBank/DDBJ databases">
        <authorList>
            <consortium name="NIH - Xenopus Gene Collection (XGC) project"/>
        </authorList>
    </citation>
    <scope>NUCLEOTIDE SEQUENCE [LARGE SCALE MRNA]</scope>
    <source>
        <tissue>Embryo</tissue>
    </source>
</reference>
<gene>
    <name type="primary">cfap96.L</name>
</gene>
<name>CFA96_XENLA</name>
<sequence>MPEGKTDMERIGLFSEMGYTSIGDKYAAPGSKPFNESASKNRQMLPGGSKSMANMLGGYFDGQFKRVFEGESYSDPFKQRRQHRMQQSKKNLGKPFLPSSGEKKRSGLGSFYGTLGGPVVAFSAELKSRKAYTAPGKNFYTNPPKDGSGYGYPSVTIGKPYPYSSENYDISRELIKKEIEHHKSKLKGGAFKLNLHPKDYFEPNPYYTDKTLPPLKVHSQKKETEKPFKPSSPAKEAGGMKAGTFDPYPTHSNDPYTAKPSKTPVKERKVFHPPGGPKTYPVHSILTSNVIKSVTALNYKTVNLASY</sequence>
<organism>
    <name type="scientific">Xenopus laevis</name>
    <name type="common">African clawed frog</name>
    <dbReference type="NCBI Taxonomy" id="8355"/>
    <lineage>
        <taxon>Eukaryota</taxon>
        <taxon>Metazoa</taxon>
        <taxon>Chordata</taxon>
        <taxon>Craniata</taxon>
        <taxon>Vertebrata</taxon>
        <taxon>Euteleostomi</taxon>
        <taxon>Amphibia</taxon>
        <taxon>Batrachia</taxon>
        <taxon>Anura</taxon>
        <taxon>Pipoidea</taxon>
        <taxon>Pipidae</taxon>
        <taxon>Xenopodinae</taxon>
        <taxon>Xenopus</taxon>
        <taxon>Xenopus</taxon>
    </lineage>
</organism>
<protein>
    <recommendedName>
        <fullName>Cilia-and flagella-associated protein 96</fullName>
    </recommendedName>
</protein>
<evidence type="ECO:0000250" key="1">
    <source>
        <dbReference type="UniProtKB" id="A7E2U8"/>
    </source>
</evidence>
<evidence type="ECO:0000256" key="2">
    <source>
        <dbReference type="SAM" id="MobiDB-lite"/>
    </source>
</evidence>
<evidence type="ECO:0000305" key="3"/>
<comment type="subcellular location">
    <subcellularLocation>
        <location evidence="1">Cytoplasm</location>
        <location evidence="1">Cytoskeleton</location>
        <location evidence="1">Microtubule organizing center</location>
        <location evidence="1">Centrosome</location>
    </subcellularLocation>
</comment>
<comment type="similarity">
    <text evidence="3">Belongs to the CFAP96 family.</text>
</comment>
<keyword id="KW-0963">Cytoplasm</keyword>
<keyword id="KW-0206">Cytoskeleton</keyword>
<keyword id="KW-1185">Reference proteome</keyword>
<dbReference type="EMBL" id="BC084137">
    <property type="protein sequence ID" value="AAH84137.1"/>
    <property type="molecule type" value="mRNA"/>
</dbReference>
<dbReference type="RefSeq" id="NP_001088214.1">
    <property type="nucleotide sequence ID" value="NM_001094745.1"/>
</dbReference>
<dbReference type="SMR" id="Q5XHC1"/>
<dbReference type="DNASU" id="495042"/>
<dbReference type="GeneID" id="495042"/>
<dbReference type="KEGG" id="xla:495042"/>
<dbReference type="AGR" id="Xenbase:XB-GENE-5731283"/>
<dbReference type="CTD" id="495042"/>
<dbReference type="Xenbase" id="XB-GENE-5731283">
    <property type="gene designation" value="cfap96.L"/>
</dbReference>
<dbReference type="OrthoDB" id="283553at2759"/>
<dbReference type="Proteomes" id="UP000186698">
    <property type="component" value="Chromosome 1L"/>
</dbReference>
<dbReference type="Bgee" id="495042">
    <property type="expression patterns" value="Expressed in testis and 17 other cell types or tissues"/>
</dbReference>
<dbReference type="GO" id="GO:0005813">
    <property type="term" value="C:centrosome"/>
    <property type="evidence" value="ECO:0000250"/>
    <property type="project" value="UniProtKB"/>
</dbReference>
<dbReference type="GO" id="GO:0005881">
    <property type="term" value="C:cytoplasmic microtubule"/>
    <property type="evidence" value="ECO:0000318"/>
    <property type="project" value="GO_Central"/>
</dbReference>
<dbReference type="InterPro" id="IPR029358">
    <property type="entry name" value="CFAP96"/>
</dbReference>
<dbReference type="PANTHER" id="PTHR31144">
    <property type="entry name" value="UPF0602 PROTEIN C4ORF47"/>
    <property type="match status" value="1"/>
</dbReference>
<dbReference type="PANTHER" id="PTHR31144:SF1">
    <property type="entry name" value="UPF0602 PROTEIN C4ORF47"/>
    <property type="match status" value="1"/>
</dbReference>
<dbReference type="Pfam" id="PF15239">
    <property type="entry name" value="CFAP96-like"/>
    <property type="match status" value="1"/>
</dbReference>
<accession>Q5XHC1</accession>